<dbReference type="EC" id="3.1.1.-"/>
<dbReference type="EMBL" id="CP017624">
    <property type="protein sequence ID" value="AOW27235.1"/>
    <property type="molecule type" value="Genomic_DNA"/>
</dbReference>
<dbReference type="RefSeq" id="XP_722550.2">
    <property type="nucleotide sequence ID" value="XM_717457.2"/>
</dbReference>
<dbReference type="STRING" id="237561.Q5AM72"/>
<dbReference type="EnsemblFungi" id="C2_01920C_A-T">
    <property type="protein sequence ID" value="C2_01920C_A-T-p1"/>
    <property type="gene ID" value="C2_01920C_A"/>
</dbReference>
<dbReference type="GeneID" id="3635792"/>
<dbReference type="KEGG" id="cal:CAALFM_C201920CA"/>
<dbReference type="CGD" id="CAL0000177360">
    <property type="gene designation" value="orf19.9080"/>
</dbReference>
<dbReference type="VEuPathDB" id="FungiDB:C2_01920C_A"/>
<dbReference type="eggNOG" id="KOG2214">
    <property type="taxonomic scope" value="Eukaryota"/>
</dbReference>
<dbReference type="HOGENOM" id="CLU_009031_2_2_1"/>
<dbReference type="InParanoid" id="Q5AM72"/>
<dbReference type="OrthoDB" id="15478at2759"/>
<dbReference type="PRO" id="PR:Q5AM72"/>
<dbReference type="Proteomes" id="UP000000559">
    <property type="component" value="Chromosome 2"/>
</dbReference>
<dbReference type="GO" id="GO:0016020">
    <property type="term" value="C:membrane"/>
    <property type="evidence" value="ECO:0007669"/>
    <property type="project" value="UniProtKB-SubCell"/>
</dbReference>
<dbReference type="GO" id="GO:0004806">
    <property type="term" value="F:triacylglycerol lipase activity"/>
    <property type="evidence" value="ECO:0007669"/>
    <property type="project" value="InterPro"/>
</dbReference>
<dbReference type="GO" id="GO:0016042">
    <property type="term" value="P:lipid catabolic process"/>
    <property type="evidence" value="ECO:0007669"/>
    <property type="project" value="UniProtKB-KW"/>
</dbReference>
<dbReference type="GO" id="GO:0006641">
    <property type="term" value="P:triglyceride metabolic process"/>
    <property type="evidence" value="ECO:0007669"/>
    <property type="project" value="UniProtKB-ARBA"/>
</dbReference>
<dbReference type="CDD" id="cd07232">
    <property type="entry name" value="Pat_PLPL"/>
    <property type="match status" value="1"/>
</dbReference>
<dbReference type="Gene3D" id="3.40.1090.10">
    <property type="entry name" value="Cytosolic phospholipase A2 catalytic domain"/>
    <property type="match status" value="2"/>
</dbReference>
<dbReference type="InterPro" id="IPR016035">
    <property type="entry name" value="Acyl_Trfase/lysoPLipase"/>
</dbReference>
<dbReference type="InterPro" id="IPR050301">
    <property type="entry name" value="NTE"/>
</dbReference>
<dbReference type="InterPro" id="IPR002641">
    <property type="entry name" value="PNPLA_dom"/>
</dbReference>
<dbReference type="InterPro" id="IPR021771">
    <property type="entry name" value="Triacylglycerol_lipase_N"/>
</dbReference>
<dbReference type="PANTHER" id="PTHR14226">
    <property type="entry name" value="NEUROPATHY TARGET ESTERASE/SWISS CHEESE D.MELANOGASTER"/>
    <property type="match status" value="1"/>
</dbReference>
<dbReference type="PANTHER" id="PTHR14226:SF66">
    <property type="entry name" value="TRIACYLGLYCEROL LIPASE PTL2"/>
    <property type="match status" value="1"/>
</dbReference>
<dbReference type="Pfam" id="PF11815">
    <property type="entry name" value="DUF3336"/>
    <property type="match status" value="1"/>
</dbReference>
<dbReference type="Pfam" id="PF01734">
    <property type="entry name" value="Patatin"/>
    <property type="match status" value="1"/>
</dbReference>
<dbReference type="SUPFAM" id="SSF52151">
    <property type="entry name" value="FabD/lysophospholipase-like"/>
    <property type="match status" value="1"/>
</dbReference>
<dbReference type="PROSITE" id="PS51635">
    <property type="entry name" value="PNPLA"/>
    <property type="match status" value="1"/>
</dbReference>
<feature type="chain" id="PRO_0000295554" description="Patatin-like phospholipase domain-containing protein CaO19.1504">
    <location>
        <begin position="1"/>
        <end position="852"/>
    </location>
</feature>
<feature type="transmembrane region" description="Helical" evidence="2">
    <location>
        <begin position="207"/>
        <end position="227"/>
    </location>
</feature>
<feature type="domain" description="PNPLA" evidence="3">
    <location>
        <begin position="396"/>
        <end position="588"/>
    </location>
</feature>
<feature type="region of interest" description="Disordered" evidence="4">
    <location>
        <begin position="41"/>
        <end position="184"/>
    </location>
</feature>
<feature type="region of interest" description="Disordered" evidence="4">
    <location>
        <begin position="800"/>
        <end position="840"/>
    </location>
</feature>
<feature type="short sequence motif" description="GXSXG" evidence="3">
    <location>
        <begin position="427"/>
        <end position="431"/>
    </location>
</feature>
<feature type="compositionally biased region" description="Low complexity" evidence="4">
    <location>
        <begin position="41"/>
        <end position="52"/>
    </location>
</feature>
<feature type="compositionally biased region" description="Polar residues" evidence="4">
    <location>
        <begin position="75"/>
        <end position="95"/>
    </location>
</feature>
<feature type="compositionally biased region" description="Low complexity" evidence="4">
    <location>
        <begin position="101"/>
        <end position="110"/>
    </location>
</feature>
<feature type="compositionally biased region" description="Acidic residues" evidence="4">
    <location>
        <begin position="113"/>
        <end position="122"/>
    </location>
</feature>
<feature type="compositionally biased region" description="Low complexity" evidence="4">
    <location>
        <begin position="129"/>
        <end position="142"/>
    </location>
</feature>
<feature type="compositionally biased region" description="Low complexity" evidence="4">
    <location>
        <begin position="158"/>
        <end position="171"/>
    </location>
</feature>
<feature type="compositionally biased region" description="Acidic residues" evidence="4">
    <location>
        <begin position="805"/>
        <end position="833"/>
    </location>
</feature>
<feature type="active site" description="Nucleophile" evidence="3">
    <location>
        <position position="429"/>
    </location>
</feature>
<feature type="active site" description="Proton acceptor" evidence="3">
    <location>
        <position position="575"/>
    </location>
</feature>
<comment type="function">
    <text evidence="1">Probable lipid hydrolase.</text>
</comment>
<comment type="subcellular location">
    <subcellularLocation>
        <location evidence="5">Membrane</location>
        <topology evidence="5">Single-pass membrane protein</topology>
    </subcellularLocation>
</comment>
<comment type="similarity">
    <text evidence="5">Belongs to the PLPL family.</text>
</comment>
<gene>
    <name type="ordered locus">CAALFM_C201920CA</name>
    <name type="ORF">CaO19.1504</name>
    <name type="ORF">CaO19.9080</name>
</gene>
<evidence type="ECO:0000250" key="1"/>
<evidence type="ECO:0000255" key="2"/>
<evidence type="ECO:0000255" key="3">
    <source>
        <dbReference type="PROSITE-ProRule" id="PRU01161"/>
    </source>
</evidence>
<evidence type="ECO:0000256" key="4">
    <source>
        <dbReference type="SAM" id="MobiDB-lite"/>
    </source>
</evidence>
<evidence type="ECO:0000305" key="5"/>
<name>PLPL_CANAL</name>
<sequence>MTERIPLFEEDKDYIDEDHISEFAKALVWQDDYDYDANTTATTDITTTPINDEVPGIVSSLPSTNGNNKNKNKDINGTVSDSSSITDEDIMNSSYFDKPHSSTNLKSNSTKNDDDDDDDDDDLISRPQSGTTDNTSTTSLSSKRPDLITSKSDWFPIGGSRSSSSSKKGSSNYHKKTTPTSSTSTKSTIEILKNEFRNSSTYTLLRWPILIFVFSWIGILGIFYFMIRIYVAVSEYLFTWRGERKRLRNKLRNSKTYEEWINNALELDKFLKLDKWSENPKFSYYDYKTIKLTILKLQKLRHQGKLIELMVILQGCLKKNFAGIENRQLYSHRYYGTKNLVEEYYQEVVKCLELINQDNNNGDDNDDDDNDNEKIDIEKKWKFFKIVSKNYGKSALCLSGGACFAYTHFGIAKALLDQNLLPQIISGTSGGGLIAALLCTRTNEELKKLLVPQLARKITACEDPWYIWIPRFLKTGARFDAIDWARKSNFFTHGSTTFEEAFQRTGRKLNISTIPADPHSPVILCNDITSPHCIIWSTLLASSAVPGILNPVVLMMKNPINGKVIPFSLGSKWRDGSLRTDIPIEALNTYYNVNFTIVSQVNPHISLFFFAPKGTVGRPVTSSTRKTRSKQQYASFRGGFIATALEQLLRLEIKKWLQIIKSLDLLPHFLQQDWSNIWLQNFTGTITIWPKNKLSDFWYILSDPTEFRMKEIIEKGEKCMFPRLLFIKHRASIENVIEKGKKLTLTKYKQLKSGGVDCDEDVDVDVDIDDEEEEGESGGVVSDYDAQSFQKVVGWSNEDKKLLDELDNEDEEEDEEEEEVDVDDDDDDDDDSLSDSFEITTEHLKQRRNTIF</sequence>
<keyword id="KW-0378">Hydrolase</keyword>
<keyword id="KW-0442">Lipid degradation</keyword>
<keyword id="KW-0443">Lipid metabolism</keyword>
<keyword id="KW-0472">Membrane</keyword>
<keyword id="KW-1185">Reference proteome</keyword>
<keyword id="KW-0812">Transmembrane</keyword>
<keyword id="KW-1133">Transmembrane helix</keyword>
<organism>
    <name type="scientific">Candida albicans (strain SC5314 / ATCC MYA-2876)</name>
    <name type="common">Yeast</name>
    <dbReference type="NCBI Taxonomy" id="237561"/>
    <lineage>
        <taxon>Eukaryota</taxon>
        <taxon>Fungi</taxon>
        <taxon>Dikarya</taxon>
        <taxon>Ascomycota</taxon>
        <taxon>Saccharomycotina</taxon>
        <taxon>Pichiomycetes</taxon>
        <taxon>Debaryomycetaceae</taxon>
        <taxon>Candida/Lodderomyces clade</taxon>
        <taxon>Candida</taxon>
    </lineage>
</organism>
<accession>Q5AM72</accession>
<accession>A0A1D8PGG8</accession>
<accession>Q5ALS2</accession>
<reference key="1">
    <citation type="journal article" date="2004" name="Proc. Natl. Acad. Sci. U.S.A.">
        <title>The diploid genome sequence of Candida albicans.</title>
        <authorList>
            <person name="Jones T."/>
            <person name="Federspiel N.A."/>
            <person name="Chibana H."/>
            <person name="Dungan J."/>
            <person name="Kalman S."/>
            <person name="Magee B.B."/>
            <person name="Newport G."/>
            <person name="Thorstenson Y.R."/>
            <person name="Agabian N."/>
            <person name="Magee P.T."/>
            <person name="Davis R.W."/>
            <person name="Scherer S."/>
        </authorList>
    </citation>
    <scope>NUCLEOTIDE SEQUENCE [LARGE SCALE GENOMIC DNA]</scope>
    <source>
        <strain>SC5314 / ATCC MYA-2876</strain>
    </source>
</reference>
<reference key="2">
    <citation type="journal article" date="2007" name="Genome Biol.">
        <title>Assembly of the Candida albicans genome into sixteen supercontigs aligned on the eight chromosomes.</title>
        <authorList>
            <person name="van het Hoog M."/>
            <person name="Rast T.J."/>
            <person name="Martchenko M."/>
            <person name="Grindle S."/>
            <person name="Dignard D."/>
            <person name="Hogues H."/>
            <person name="Cuomo C."/>
            <person name="Berriman M."/>
            <person name="Scherer S."/>
            <person name="Magee B.B."/>
            <person name="Whiteway M."/>
            <person name="Chibana H."/>
            <person name="Nantel A."/>
            <person name="Magee P.T."/>
        </authorList>
    </citation>
    <scope>GENOME REANNOTATION</scope>
    <source>
        <strain>SC5314 / ATCC MYA-2876</strain>
    </source>
</reference>
<reference key="3">
    <citation type="journal article" date="2013" name="Genome Biol.">
        <title>Assembly of a phased diploid Candida albicans genome facilitates allele-specific measurements and provides a simple model for repeat and indel structure.</title>
        <authorList>
            <person name="Muzzey D."/>
            <person name="Schwartz K."/>
            <person name="Weissman J.S."/>
            <person name="Sherlock G."/>
        </authorList>
    </citation>
    <scope>NUCLEOTIDE SEQUENCE [LARGE SCALE GENOMIC DNA]</scope>
    <scope>GENOME REANNOTATION</scope>
    <source>
        <strain>SC5314 / ATCC MYA-2876</strain>
    </source>
</reference>
<protein>
    <recommendedName>
        <fullName>Patatin-like phospholipase domain-containing protein CaO19.1504</fullName>
        <ecNumber>3.1.1.-</ecNumber>
    </recommendedName>
</protein>
<proteinExistence type="inferred from homology"/>